<proteinExistence type="inferred from homology"/>
<protein>
    <recommendedName>
        <fullName evidence="1">Phosphoglucosamine mutase</fullName>
        <ecNumber evidence="1">5.4.2.10</ecNumber>
    </recommendedName>
</protein>
<keyword id="KW-0413">Isomerase</keyword>
<keyword id="KW-0460">Magnesium</keyword>
<keyword id="KW-0479">Metal-binding</keyword>
<keyword id="KW-0597">Phosphoprotein</keyword>
<keyword id="KW-1185">Reference proteome</keyword>
<accession>Q1QSY5</accession>
<organism>
    <name type="scientific">Chromohalobacter salexigens (strain ATCC BAA-138 / DSM 3043 / CIP 106854 / NCIMB 13768 / 1H11)</name>
    <dbReference type="NCBI Taxonomy" id="290398"/>
    <lineage>
        <taxon>Bacteria</taxon>
        <taxon>Pseudomonadati</taxon>
        <taxon>Pseudomonadota</taxon>
        <taxon>Gammaproteobacteria</taxon>
        <taxon>Oceanospirillales</taxon>
        <taxon>Halomonadaceae</taxon>
        <taxon>Chromohalobacter</taxon>
    </lineage>
</organism>
<name>GLMM_CHRSD</name>
<dbReference type="EC" id="5.4.2.10" evidence="1"/>
<dbReference type="EMBL" id="CP000285">
    <property type="protein sequence ID" value="ABE60423.1"/>
    <property type="molecule type" value="Genomic_DNA"/>
</dbReference>
<dbReference type="RefSeq" id="WP_011508369.1">
    <property type="nucleotide sequence ID" value="NC_007963.1"/>
</dbReference>
<dbReference type="SMR" id="Q1QSY5"/>
<dbReference type="STRING" id="290398.Csal_3079"/>
<dbReference type="GeneID" id="95335775"/>
<dbReference type="KEGG" id="csa:Csal_3079"/>
<dbReference type="eggNOG" id="COG1109">
    <property type="taxonomic scope" value="Bacteria"/>
</dbReference>
<dbReference type="HOGENOM" id="CLU_016950_7_0_6"/>
<dbReference type="OrthoDB" id="9803322at2"/>
<dbReference type="Proteomes" id="UP000000239">
    <property type="component" value="Chromosome"/>
</dbReference>
<dbReference type="GO" id="GO:0005829">
    <property type="term" value="C:cytosol"/>
    <property type="evidence" value="ECO:0007669"/>
    <property type="project" value="TreeGrafter"/>
</dbReference>
<dbReference type="GO" id="GO:0000287">
    <property type="term" value="F:magnesium ion binding"/>
    <property type="evidence" value="ECO:0007669"/>
    <property type="project" value="UniProtKB-UniRule"/>
</dbReference>
<dbReference type="GO" id="GO:0008966">
    <property type="term" value="F:phosphoglucosamine mutase activity"/>
    <property type="evidence" value="ECO:0007669"/>
    <property type="project" value="UniProtKB-UniRule"/>
</dbReference>
<dbReference type="GO" id="GO:0004615">
    <property type="term" value="F:phosphomannomutase activity"/>
    <property type="evidence" value="ECO:0007669"/>
    <property type="project" value="TreeGrafter"/>
</dbReference>
<dbReference type="GO" id="GO:0005975">
    <property type="term" value="P:carbohydrate metabolic process"/>
    <property type="evidence" value="ECO:0007669"/>
    <property type="project" value="InterPro"/>
</dbReference>
<dbReference type="GO" id="GO:0009252">
    <property type="term" value="P:peptidoglycan biosynthetic process"/>
    <property type="evidence" value="ECO:0007669"/>
    <property type="project" value="TreeGrafter"/>
</dbReference>
<dbReference type="GO" id="GO:0006048">
    <property type="term" value="P:UDP-N-acetylglucosamine biosynthetic process"/>
    <property type="evidence" value="ECO:0007669"/>
    <property type="project" value="TreeGrafter"/>
</dbReference>
<dbReference type="CDD" id="cd05802">
    <property type="entry name" value="GlmM"/>
    <property type="match status" value="1"/>
</dbReference>
<dbReference type="FunFam" id="3.30.310.50:FF:000001">
    <property type="entry name" value="Phosphoglucosamine mutase"/>
    <property type="match status" value="1"/>
</dbReference>
<dbReference type="FunFam" id="3.40.120.10:FF:000001">
    <property type="entry name" value="Phosphoglucosamine mutase"/>
    <property type="match status" value="1"/>
</dbReference>
<dbReference type="FunFam" id="3.40.120.10:FF:000002">
    <property type="entry name" value="Phosphoglucosamine mutase"/>
    <property type="match status" value="1"/>
</dbReference>
<dbReference type="FunFam" id="3.40.120.10:FF:000003">
    <property type="entry name" value="Phosphoglucosamine mutase"/>
    <property type="match status" value="1"/>
</dbReference>
<dbReference type="Gene3D" id="3.40.120.10">
    <property type="entry name" value="Alpha-D-Glucose-1,6-Bisphosphate, subunit A, domain 3"/>
    <property type="match status" value="3"/>
</dbReference>
<dbReference type="Gene3D" id="3.30.310.50">
    <property type="entry name" value="Alpha-D-phosphohexomutase, C-terminal domain"/>
    <property type="match status" value="1"/>
</dbReference>
<dbReference type="HAMAP" id="MF_01554_B">
    <property type="entry name" value="GlmM_B"/>
    <property type="match status" value="1"/>
</dbReference>
<dbReference type="InterPro" id="IPR005844">
    <property type="entry name" value="A-D-PHexomutase_a/b/a-I"/>
</dbReference>
<dbReference type="InterPro" id="IPR016055">
    <property type="entry name" value="A-D-PHexomutase_a/b/a-I/II/III"/>
</dbReference>
<dbReference type="InterPro" id="IPR005845">
    <property type="entry name" value="A-D-PHexomutase_a/b/a-II"/>
</dbReference>
<dbReference type="InterPro" id="IPR005846">
    <property type="entry name" value="A-D-PHexomutase_a/b/a-III"/>
</dbReference>
<dbReference type="InterPro" id="IPR005843">
    <property type="entry name" value="A-D-PHexomutase_C"/>
</dbReference>
<dbReference type="InterPro" id="IPR036900">
    <property type="entry name" value="A-D-PHexomutase_C_sf"/>
</dbReference>
<dbReference type="InterPro" id="IPR016066">
    <property type="entry name" value="A-D-PHexomutase_CS"/>
</dbReference>
<dbReference type="InterPro" id="IPR005841">
    <property type="entry name" value="Alpha-D-phosphohexomutase_SF"/>
</dbReference>
<dbReference type="InterPro" id="IPR006352">
    <property type="entry name" value="GlmM_bact"/>
</dbReference>
<dbReference type="InterPro" id="IPR050060">
    <property type="entry name" value="Phosphoglucosamine_mutase"/>
</dbReference>
<dbReference type="NCBIfam" id="TIGR01455">
    <property type="entry name" value="glmM"/>
    <property type="match status" value="1"/>
</dbReference>
<dbReference type="NCBIfam" id="NF008139">
    <property type="entry name" value="PRK10887.1"/>
    <property type="match status" value="1"/>
</dbReference>
<dbReference type="PANTHER" id="PTHR42946:SF1">
    <property type="entry name" value="PHOSPHOGLUCOMUTASE (ALPHA-D-GLUCOSE-1,6-BISPHOSPHATE-DEPENDENT)"/>
    <property type="match status" value="1"/>
</dbReference>
<dbReference type="PANTHER" id="PTHR42946">
    <property type="entry name" value="PHOSPHOHEXOSE MUTASE"/>
    <property type="match status" value="1"/>
</dbReference>
<dbReference type="Pfam" id="PF02878">
    <property type="entry name" value="PGM_PMM_I"/>
    <property type="match status" value="1"/>
</dbReference>
<dbReference type="Pfam" id="PF02879">
    <property type="entry name" value="PGM_PMM_II"/>
    <property type="match status" value="1"/>
</dbReference>
<dbReference type="Pfam" id="PF02880">
    <property type="entry name" value="PGM_PMM_III"/>
    <property type="match status" value="1"/>
</dbReference>
<dbReference type="Pfam" id="PF00408">
    <property type="entry name" value="PGM_PMM_IV"/>
    <property type="match status" value="1"/>
</dbReference>
<dbReference type="PRINTS" id="PR00509">
    <property type="entry name" value="PGMPMM"/>
</dbReference>
<dbReference type="SUPFAM" id="SSF55957">
    <property type="entry name" value="Phosphoglucomutase, C-terminal domain"/>
    <property type="match status" value="1"/>
</dbReference>
<dbReference type="SUPFAM" id="SSF53738">
    <property type="entry name" value="Phosphoglucomutase, first 3 domains"/>
    <property type="match status" value="3"/>
</dbReference>
<dbReference type="PROSITE" id="PS00710">
    <property type="entry name" value="PGM_PMM"/>
    <property type="match status" value="1"/>
</dbReference>
<feature type="chain" id="PRO_0000301300" description="Phosphoglucosamine mutase">
    <location>
        <begin position="1"/>
        <end position="453"/>
    </location>
</feature>
<feature type="active site" description="Phosphoserine intermediate" evidence="1">
    <location>
        <position position="105"/>
    </location>
</feature>
<feature type="binding site" description="via phosphate group" evidence="1">
    <location>
        <position position="105"/>
    </location>
    <ligand>
        <name>Mg(2+)</name>
        <dbReference type="ChEBI" id="CHEBI:18420"/>
    </ligand>
</feature>
<feature type="binding site" evidence="1">
    <location>
        <position position="244"/>
    </location>
    <ligand>
        <name>Mg(2+)</name>
        <dbReference type="ChEBI" id="CHEBI:18420"/>
    </ligand>
</feature>
<feature type="binding site" evidence="1">
    <location>
        <position position="246"/>
    </location>
    <ligand>
        <name>Mg(2+)</name>
        <dbReference type="ChEBI" id="CHEBI:18420"/>
    </ligand>
</feature>
<feature type="binding site" evidence="1">
    <location>
        <position position="248"/>
    </location>
    <ligand>
        <name>Mg(2+)</name>
        <dbReference type="ChEBI" id="CHEBI:18420"/>
    </ligand>
</feature>
<feature type="modified residue" description="Phosphoserine" evidence="1">
    <location>
        <position position="105"/>
    </location>
</feature>
<sequence length="453" mass="48090">MTRRYFGTDGIRGTVGEAPITADFVLKLGWAMGRVLSRRTGRKSRAKVLIGKDTRISGYMFESALEAGLSAAGVDVSLLGPMPTPGIAYLTRTFRADAGIVISASHNPFQDNGIKFFSAEGVKLADAVEEEIEAELDLPLSTVAPDALGKALRIQDAAGRYIEFCKSTVPDRLTLEGLKVVLDCAHGATYHIAPSVLRELGAEVSLIGAEPDGLNINHGVGSTHPAALRAAVIERGADLGVALDGDGDRVVLVDAEGREVDGDDILYLIARDRRARDLLGGGVVGTLMSNFGLAAALEALDIPFERAKVGDRYVMERLAANGWQLGGESSGHIVCGHVQTTGDGIVSALQVLAIMVREGASLAALLQGFEKAPQALVNVRLTPETDKEALLGNEQVQHTVASVEAELGEEGRVLLRPSGTEPLIRVMVEGRPHFDVDALARRIADDIEGHMVR</sequence>
<reference key="1">
    <citation type="journal article" date="2011" name="Stand. Genomic Sci.">
        <title>Complete genome sequence of the halophilic and highly halotolerant Chromohalobacter salexigens type strain (1H11(T)).</title>
        <authorList>
            <person name="Copeland A."/>
            <person name="O'Connor K."/>
            <person name="Lucas S."/>
            <person name="Lapidus A."/>
            <person name="Berry K.W."/>
            <person name="Detter J.C."/>
            <person name="Del Rio T.G."/>
            <person name="Hammon N."/>
            <person name="Dalin E."/>
            <person name="Tice H."/>
            <person name="Pitluck S."/>
            <person name="Bruce D."/>
            <person name="Goodwin L."/>
            <person name="Han C."/>
            <person name="Tapia R."/>
            <person name="Saunders E."/>
            <person name="Schmutz J."/>
            <person name="Brettin T."/>
            <person name="Larimer F."/>
            <person name="Land M."/>
            <person name="Hauser L."/>
            <person name="Vargas C."/>
            <person name="Nieto J.J."/>
            <person name="Kyrpides N.C."/>
            <person name="Ivanova N."/>
            <person name="Goker M."/>
            <person name="Klenk H.P."/>
            <person name="Csonka L.N."/>
            <person name="Woyke T."/>
        </authorList>
    </citation>
    <scope>NUCLEOTIDE SEQUENCE [LARGE SCALE GENOMIC DNA]</scope>
    <source>
        <strain>ATCC BAA-138 / DSM 3043 / CIP 106854 / NCIMB 13768 / 1H11</strain>
    </source>
</reference>
<evidence type="ECO:0000255" key="1">
    <source>
        <dbReference type="HAMAP-Rule" id="MF_01554"/>
    </source>
</evidence>
<comment type="function">
    <text evidence="1">Catalyzes the conversion of glucosamine-6-phosphate to glucosamine-1-phosphate.</text>
</comment>
<comment type="catalytic activity">
    <reaction evidence="1">
        <text>alpha-D-glucosamine 1-phosphate = D-glucosamine 6-phosphate</text>
        <dbReference type="Rhea" id="RHEA:23424"/>
        <dbReference type="ChEBI" id="CHEBI:58516"/>
        <dbReference type="ChEBI" id="CHEBI:58725"/>
        <dbReference type="EC" id="5.4.2.10"/>
    </reaction>
</comment>
<comment type="cofactor">
    <cofactor evidence="1">
        <name>Mg(2+)</name>
        <dbReference type="ChEBI" id="CHEBI:18420"/>
    </cofactor>
    <text evidence="1">Binds 1 Mg(2+) ion per subunit.</text>
</comment>
<comment type="PTM">
    <text evidence="1">Activated by phosphorylation.</text>
</comment>
<comment type="similarity">
    <text evidence="1">Belongs to the phosphohexose mutase family.</text>
</comment>
<gene>
    <name evidence="1" type="primary">glmM</name>
    <name type="ordered locus">Csal_3079</name>
</gene>